<evidence type="ECO:0000255" key="1">
    <source>
        <dbReference type="HAMAP-Rule" id="MF_00054"/>
    </source>
</evidence>
<comment type="function">
    <text evidence="1">Catalyzes the GTP-dependent ribosomal translocation step during translation elongation. During this step, the ribosome changes from the pre-translocational (PRE) to the post-translocational (POST) state as the newly formed A-site-bound peptidyl-tRNA and P-site-bound deacylated tRNA move to the P and E sites, respectively. Catalyzes the coordinated movement of the two tRNA molecules, the mRNA and conformational changes in the ribosome.</text>
</comment>
<comment type="subcellular location">
    <subcellularLocation>
        <location evidence="1">Cytoplasm</location>
    </subcellularLocation>
</comment>
<comment type="similarity">
    <text evidence="1">Belongs to the TRAFAC class translation factor GTPase superfamily. Classic translation factor GTPase family. EF-G/EF-2 subfamily.</text>
</comment>
<proteinExistence type="inferred from homology"/>
<protein>
    <recommendedName>
        <fullName evidence="1">Elongation factor G 1</fullName>
        <shortName evidence="1">EF-G 1</shortName>
    </recommendedName>
</protein>
<accession>Q39Y09</accession>
<name>EFG1_GEOMG</name>
<dbReference type="EMBL" id="CP000148">
    <property type="protein sequence ID" value="ABB30865.1"/>
    <property type="molecule type" value="Genomic_DNA"/>
</dbReference>
<dbReference type="SMR" id="Q39Y09"/>
<dbReference type="STRING" id="269799.Gmet_0623"/>
<dbReference type="KEGG" id="gme:Gmet_0623"/>
<dbReference type="eggNOG" id="COG0480">
    <property type="taxonomic scope" value="Bacteria"/>
</dbReference>
<dbReference type="HOGENOM" id="CLU_002794_4_1_7"/>
<dbReference type="Proteomes" id="UP000007073">
    <property type="component" value="Chromosome"/>
</dbReference>
<dbReference type="GO" id="GO:0005737">
    <property type="term" value="C:cytoplasm"/>
    <property type="evidence" value="ECO:0007669"/>
    <property type="project" value="UniProtKB-SubCell"/>
</dbReference>
<dbReference type="GO" id="GO:0005525">
    <property type="term" value="F:GTP binding"/>
    <property type="evidence" value="ECO:0007669"/>
    <property type="project" value="UniProtKB-UniRule"/>
</dbReference>
<dbReference type="GO" id="GO:0003924">
    <property type="term" value="F:GTPase activity"/>
    <property type="evidence" value="ECO:0007669"/>
    <property type="project" value="InterPro"/>
</dbReference>
<dbReference type="GO" id="GO:0003746">
    <property type="term" value="F:translation elongation factor activity"/>
    <property type="evidence" value="ECO:0007669"/>
    <property type="project" value="UniProtKB-UniRule"/>
</dbReference>
<dbReference type="GO" id="GO:0032790">
    <property type="term" value="P:ribosome disassembly"/>
    <property type="evidence" value="ECO:0007669"/>
    <property type="project" value="TreeGrafter"/>
</dbReference>
<dbReference type="CDD" id="cd01886">
    <property type="entry name" value="EF-G"/>
    <property type="match status" value="1"/>
</dbReference>
<dbReference type="CDD" id="cd16262">
    <property type="entry name" value="EFG_III"/>
    <property type="match status" value="1"/>
</dbReference>
<dbReference type="CDD" id="cd01434">
    <property type="entry name" value="EFG_mtEFG1_IV"/>
    <property type="match status" value="1"/>
</dbReference>
<dbReference type="CDD" id="cd03713">
    <property type="entry name" value="EFG_mtEFG_C"/>
    <property type="match status" value="1"/>
</dbReference>
<dbReference type="CDD" id="cd04088">
    <property type="entry name" value="EFG_mtEFG_II"/>
    <property type="match status" value="1"/>
</dbReference>
<dbReference type="FunFam" id="2.40.30.10:FF:000006">
    <property type="entry name" value="Elongation factor G"/>
    <property type="match status" value="1"/>
</dbReference>
<dbReference type="FunFam" id="3.30.230.10:FF:000003">
    <property type="entry name" value="Elongation factor G"/>
    <property type="match status" value="1"/>
</dbReference>
<dbReference type="FunFam" id="3.30.70.240:FF:000001">
    <property type="entry name" value="Elongation factor G"/>
    <property type="match status" value="1"/>
</dbReference>
<dbReference type="FunFam" id="3.30.70.870:FF:000001">
    <property type="entry name" value="Elongation factor G"/>
    <property type="match status" value="1"/>
</dbReference>
<dbReference type="FunFam" id="3.40.50.300:FF:000029">
    <property type="entry name" value="Elongation factor G"/>
    <property type="match status" value="1"/>
</dbReference>
<dbReference type="Gene3D" id="3.30.230.10">
    <property type="match status" value="1"/>
</dbReference>
<dbReference type="Gene3D" id="3.30.70.240">
    <property type="match status" value="1"/>
</dbReference>
<dbReference type="Gene3D" id="3.30.70.870">
    <property type="entry name" value="Elongation Factor G (Translational Gtpase), domain 3"/>
    <property type="match status" value="1"/>
</dbReference>
<dbReference type="Gene3D" id="3.40.50.300">
    <property type="entry name" value="P-loop containing nucleotide triphosphate hydrolases"/>
    <property type="match status" value="1"/>
</dbReference>
<dbReference type="Gene3D" id="2.40.30.10">
    <property type="entry name" value="Translation factors"/>
    <property type="match status" value="1"/>
</dbReference>
<dbReference type="HAMAP" id="MF_00054_B">
    <property type="entry name" value="EF_G_EF_2_B"/>
    <property type="match status" value="1"/>
</dbReference>
<dbReference type="InterPro" id="IPR041095">
    <property type="entry name" value="EFG_II"/>
</dbReference>
<dbReference type="InterPro" id="IPR009022">
    <property type="entry name" value="EFG_III"/>
</dbReference>
<dbReference type="InterPro" id="IPR035647">
    <property type="entry name" value="EFG_III/V"/>
</dbReference>
<dbReference type="InterPro" id="IPR047872">
    <property type="entry name" value="EFG_IV"/>
</dbReference>
<dbReference type="InterPro" id="IPR035649">
    <property type="entry name" value="EFG_V"/>
</dbReference>
<dbReference type="InterPro" id="IPR000640">
    <property type="entry name" value="EFG_V-like"/>
</dbReference>
<dbReference type="InterPro" id="IPR004161">
    <property type="entry name" value="EFTu-like_2"/>
</dbReference>
<dbReference type="InterPro" id="IPR031157">
    <property type="entry name" value="G_TR_CS"/>
</dbReference>
<dbReference type="InterPro" id="IPR027417">
    <property type="entry name" value="P-loop_NTPase"/>
</dbReference>
<dbReference type="InterPro" id="IPR020568">
    <property type="entry name" value="Ribosomal_Su5_D2-typ_SF"/>
</dbReference>
<dbReference type="InterPro" id="IPR014721">
    <property type="entry name" value="Ribsml_uS5_D2-typ_fold_subgr"/>
</dbReference>
<dbReference type="InterPro" id="IPR005225">
    <property type="entry name" value="Small_GTP-bd"/>
</dbReference>
<dbReference type="InterPro" id="IPR000795">
    <property type="entry name" value="T_Tr_GTP-bd_dom"/>
</dbReference>
<dbReference type="InterPro" id="IPR009000">
    <property type="entry name" value="Transl_B-barrel_sf"/>
</dbReference>
<dbReference type="InterPro" id="IPR004540">
    <property type="entry name" value="Transl_elong_EFG/EF2"/>
</dbReference>
<dbReference type="InterPro" id="IPR005517">
    <property type="entry name" value="Transl_elong_EFG/EF2_IV"/>
</dbReference>
<dbReference type="NCBIfam" id="TIGR00484">
    <property type="entry name" value="EF-G"/>
    <property type="match status" value="1"/>
</dbReference>
<dbReference type="NCBIfam" id="NF009379">
    <property type="entry name" value="PRK12740.1-3"/>
    <property type="match status" value="1"/>
</dbReference>
<dbReference type="NCBIfam" id="NF009381">
    <property type="entry name" value="PRK12740.1-5"/>
    <property type="match status" value="1"/>
</dbReference>
<dbReference type="NCBIfam" id="TIGR00231">
    <property type="entry name" value="small_GTP"/>
    <property type="match status" value="1"/>
</dbReference>
<dbReference type="PANTHER" id="PTHR43261:SF1">
    <property type="entry name" value="RIBOSOME-RELEASING FACTOR 2, MITOCHONDRIAL"/>
    <property type="match status" value="1"/>
</dbReference>
<dbReference type="PANTHER" id="PTHR43261">
    <property type="entry name" value="TRANSLATION ELONGATION FACTOR G-RELATED"/>
    <property type="match status" value="1"/>
</dbReference>
<dbReference type="Pfam" id="PF00679">
    <property type="entry name" value="EFG_C"/>
    <property type="match status" value="1"/>
</dbReference>
<dbReference type="Pfam" id="PF14492">
    <property type="entry name" value="EFG_III"/>
    <property type="match status" value="1"/>
</dbReference>
<dbReference type="Pfam" id="PF03764">
    <property type="entry name" value="EFG_IV"/>
    <property type="match status" value="1"/>
</dbReference>
<dbReference type="Pfam" id="PF00009">
    <property type="entry name" value="GTP_EFTU"/>
    <property type="match status" value="1"/>
</dbReference>
<dbReference type="Pfam" id="PF03144">
    <property type="entry name" value="GTP_EFTU_D2"/>
    <property type="match status" value="1"/>
</dbReference>
<dbReference type="PRINTS" id="PR00315">
    <property type="entry name" value="ELONGATNFCT"/>
</dbReference>
<dbReference type="SMART" id="SM00838">
    <property type="entry name" value="EFG_C"/>
    <property type="match status" value="1"/>
</dbReference>
<dbReference type="SMART" id="SM00889">
    <property type="entry name" value="EFG_IV"/>
    <property type="match status" value="1"/>
</dbReference>
<dbReference type="SUPFAM" id="SSF54980">
    <property type="entry name" value="EF-G C-terminal domain-like"/>
    <property type="match status" value="2"/>
</dbReference>
<dbReference type="SUPFAM" id="SSF52540">
    <property type="entry name" value="P-loop containing nucleoside triphosphate hydrolases"/>
    <property type="match status" value="1"/>
</dbReference>
<dbReference type="SUPFAM" id="SSF54211">
    <property type="entry name" value="Ribosomal protein S5 domain 2-like"/>
    <property type="match status" value="1"/>
</dbReference>
<dbReference type="SUPFAM" id="SSF50447">
    <property type="entry name" value="Translation proteins"/>
    <property type="match status" value="1"/>
</dbReference>
<dbReference type="PROSITE" id="PS00301">
    <property type="entry name" value="G_TR_1"/>
    <property type="match status" value="1"/>
</dbReference>
<dbReference type="PROSITE" id="PS51722">
    <property type="entry name" value="G_TR_2"/>
    <property type="match status" value="1"/>
</dbReference>
<sequence length="692" mass="75920">MARLVPLEKTRNIGIMAHIDAGKTTTTERILYYTGVTHKIGEVHEGAATMDWMEQEQERGITITSAATTCNWGDHRINIIDTPGHVDFTIEVERSLRVLDGAVAVFCSVGGVEPQSETVWRQADKYGVPRIAFVNKMDRVGADFFRGVSMIRDRLKANPVPIQLPIGAEDTFKGVVDLVEMKAIVWDEESLGAKFHVEEIPADLQELAQEYHEKMVEEISSHDDALMEKYLGGEELTVDEVRAAIRNATIAIQICPVICGSSFKNKGVQNLLDSVVEYLPSPVDIPAIKGVDADSGAEIERKAADSEPFAALAFKIMTDPFVGQLCFIRVYSGVLNSGSYVYNSTKGKKERIGRLLKMHANKREEIKEVLAGDIAAAVGLKYTTTGDTLCPEDAPVILESIEFPEPVIAIAIEPKTKADQEKLGISLQKLASEDPSFRVRTDEETGQTIISGMGELHLEIIVDRLMREFKVEANVGKPQVAYRETVTKKVKVEGKFVRQSGGRGQYGHVWIEMEPQEPGKGYEFVDAIKGGVVPREYIPAVDKGIQEAMDTGVLAGFPCVDFKVSLVDGSYHEVDSSEMAFKIAGSMAFKEAAAKASPVLLEPIMSVEVVVPEEYMGDVIGDLNSRRGRIMGMEGRAGAQVVSAMVPLAQMFGYATDLRSATQGRATYTMTFDHYEQVPKSVSEEIIAKVKG</sequence>
<organism>
    <name type="scientific">Geobacter metallireducens (strain ATCC 53774 / DSM 7210 / GS-15)</name>
    <dbReference type="NCBI Taxonomy" id="269799"/>
    <lineage>
        <taxon>Bacteria</taxon>
        <taxon>Pseudomonadati</taxon>
        <taxon>Thermodesulfobacteriota</taxon>
        <taxon>Desulfuromonadia</taxon>
        <taxon>Geobacterales</taxon>
        <taxon>Geobacteraceae</taxon>
        <taxon>Geobacter</taxon>
    </lineage>
</organism>
<feature type="chain" id="PRO_0000263454" description="Elongation factor G 1">
    <location>
        <begin position="1"/>
        <end position="692"/>
    </location>
</feature>
<feature type="domain" description="tr-type G">
    <location>
        <begin position="8"/>
        <end position="283"/>
    </location>
</feature>
<feature type="binding site" evidence="1">
    <location>
        <begin position="17"/>
        <end position="24"/>
    </location>
    <ligand>
        <name>GTP</name>
        <dbReference type="ChEBI" id="CHEBI:37565"/>
    </ligand>
</feature>
<feature type="binding site" evidence="1">
    <location>
        <begin position="81"/>
        <end position="85"/>
    </location>
    <ligand>
        <name>GTP</name>
        <dbReference type="ChEBI" id="CHEBI:37565"/>
    </ligand>
</feature>
<feature type="binding site" evidence="1">
    <location>
        <begin position="135"/>
        <end position="138"/>
    </location>
    <ligand>
        <name>GTP</name>
        <dbReference type="ChEBI" id="CHEBI:37565"/>
    </ligand>
</feature>
<reference key="1">
    <citation type="journal article" date="2009" name="BMC Microbiol.">
        <title>The genome sequence of Geobacter metallireducens: features of metabolism, physiology and regulation common and dissimilar to Geobacter sulfurreducens.</title>
        <authorList>
            <person name="Aklujkar M."/>
            <person name="Krushkal J."/>
            <person name="DiBartolo G."/>
            <person name="Lapidus A."/>
            <person name="Land M.L."/>
            <person name="Lovley D.R."/>
        </authorList>
    </citation>
    <scope>NUCLEOTIDE SEQUENCE [LARGE SCALE GENOMIC DNA]</scope>
    <source>
        <strain>ATCC 53774 / DSM 7210 / GS-15</strain>
    </source>
</reference>
<gene>
    <name evidence="1" type="primary">fusA1</name>
    <name type="ordered locus">Gmet_0623</name>
</gene>
<keyword id="KW-0963">Cytoplasm</keyword>
<keyword id="KW-0251">Elongation factor</keyword>
<keyword id="KW-0342">GTP-binding</keyword>
<keyword id="KW-0547">Nucleotide-binding</keyword>
<keyword id="KW-0648">Protein biosynthesis</keyword>
<keyword id="KW-1185">Reference proteome</keyword>